<reference key="1">
    <citation type="journal article" date="2008" name="J. Bacteriol.">
        <title>Genome sequence of Staphylococcus aureus strain Newman and comparative analysis of staphylococcal genomes: polymorphism and evolution of two major pathogenicity islands.</title>
        <authorList>
            <person name="Baba T."/>
            <person name="Bae T."/>
            <person name="Schneewind O."/>
            <person name="Takeuchi F."/>
            <person name="Hiramatsu K."/>
        </authorList>
    </citation>
    <scope>NUCLEOTIDE SEQUENCE [LARGE SCALE GENOMIC DNA]</scope>
    <source>
        <strain>Newman</strain>
    </source>
</reference>
<accession>A6QGK1</accession>
<dbReference type="EC" id="2.5.1.75" evidence="1"/>
<dbReference type="EMBL" id="AP009351">
    <property type="protein sequence ID" value="BAF67483.1"/>
    <property type="molecule type" value="Genomic_DNA"/>
</dbReference>
<dbReference type="RefSeq" id="WP_001548613.1">
    <property type="nucleotide sequence ID" value="NZ_JBBIAE010000001.1"/>
</dbReference>
<dbReference type="SMR" id="A6QGK1"/>
<dbReference type="KEGG" id="sae:NWMN_1211"/>
<dbReference type="HOGENOM" id="CLU_032616_0_1_9"/>
<dbReference type="Proteomes" id="UP000006386">
    <property type="component" value="Chromosome"/>
</dbReference>
<dbReference type="GO" id="GO:0005524">
    <property type="term" value="F:ATP binding"/>
    <property type="evidence" value="ECO:0007669"/>
    <property type="project" value="UniProtKB-UniRule"/>
</dbReference>
<dbReference type="GO" id="GO:0052381">
    <property type="term" value="F:tRNA dimethylallyltransferase activity"/>
    <property type="evidence" value="ECO:0007669"/>
    <property type="project" value="UniProtKB-UniRule"/>
</dbReference>
<dbReference type="GO" id="GO:0006400">
    <property type="term" value="P:tRNA modification"/>
    <property type="evidence" value="ECO:0007669"/>
    <property type="project" value="TreeGrafter"/>
</dbReference>
<dbReference type="FunFam" id="1.10.20.140:FF:000004">
    <property type="entry name" value="tRNA dimethylallyltransferase"/>
    <property type="match status" value="1"/>
</dbReference>
<dbReference type="Gene3D" id="1.10.20.140">
    <property type="match status" value="1"/>
</dbReference>
<dbReference type="Gene3D" id="3.40.50.300">
    <property type="entry name" value="P-loop containing nucleotide triphosphate hydrolases"/>
    <property type="match status" value="1"/>
</dbReference>
<dbReference type="HAMAP" id="MF_00185">
    <property type="entry name" value="IPP_trans"/>
    <property type="match status" value="1"/>
</dbReference>
<dbReference type="InterPro" id="IPR039657">
    <property type="entry name" value="Dimethylallyltransferase"/>
</dbReference>
<dbReference type="InterPro" id="IPR018022">
    <property type="entry name" value="IPT"/>
</dbReference>
<dbReference type="InterPro" id="IPR027417">
    <property type="entry name" value="P-loop_NTPase"/>
</dbReference>
<dbReference type="NCBIfam" id="TIGR00174">
    <property type="entry name" value="miaA"/>
    <property type="match status" value="1"/>
</dbReference>
<dbReference type="PANTHER" id="PTHR11088">
    <property type="entry name" value="TRNA DIMETHYLALLYLTRANSFERASE"/>
    <property type="match status" value="1"/>
</dbReference>
<dbReference type="PANTHER" id="PTHR11088:SF60">
    <property type="entry name" value="TRNA DIMETHYLALLYLTRANSFERASE"/>
    <property type="match status" value="1"/>
</dbReference>
<dbReference type="Pfam" id="PF01715">
    <property type="entry name" value="IPPT"/>
    <property type="match status" value="1"/>
</dbReference>
<dbReference type="SUPFAM" id="SSF52540">
    <property type="entry name" value="P-loop containing nucleoside triphosphate hydrolases"/>
    <property type="match status" value="2"/>
</dbReference>
<name>MIAA_STAAE</name>
<feature type="chain" id="PRO_1000071682" description="tRNA dimethylallyltransferase">
    <location>
        <begin position="1"/>
        <end position="311"/>
    </location>
</feature>
<feature type="region of interest" description="Interaction with substrate tRNA" evidence="1">
    <location>
        <begin position="38"/>
        <end position="41"/>
    </location>
</feature>
<feature type="region of interest" description="Interaction with substrate tRNA" evidence="1">
    <location>
        <begin position="166"/>
        <end position="170"/>
    </location>
</feature>
<feature type="binding site" evidence="1">
    <location>
        <begin position="13"/>
        <end position="20"/>
    </location>
    <ligand>
        <name>ATP</name>
        <dbReference type="ChEBI" id="CHEBI:30616"/>
    </ligand>
</feature>
<feature type="binding site" evidence="1">
    <location>
        <begin position="15"/>
        <end position="20"/>
    </location>
    <ligand>
        <name>substrate</name>
    </ligand>
</feature>
<feature type="site" description="Interaction with substrate tRNA" evidence="1">
    <location>
        <position position="104"/>
    </location>
</feature>
<organism>
    <name type="scientific">Staphylococcus aureus (strain Newman)</name>
    <dbReference type="NCBI Taxonomy" id="426430"/>
    <lineage>
        <taxon>Bacteria</taxon>
        <taxon>Bacillati</taxon>
        <taxon>Bacillota</taxon>
        <taxon>Bacilli</taxon>
        <taxon>Bacillales</taxon>
        <taxon>Staphylococcaceae</taxon>
        <taxon>Staphylococcus</taxon>
    </lineage>
</organism>
<keyword id="KW-0067">ATP-binding</keyword>
<keyword id="KW-0460">Magnesium</keyword>
<keyword id="KW-0547">Nucleotide-binding</keyword>
<keyword id="KW-0808">Transferase</keyword>
<keyword id="KW-0819">tRNA processing</keyword>
<proteinExistence type="inferred from homology"/>
<comment type="function">
    <text evidence="1">Catalyzes the transfer of a dimethylallyl group onto the adenine at position 37 in tRNAs that read codons beginning with uridine, leading to the formation of N6-(dimethylallyl)adenosine (i(6)A).</text>
</comment>
<comment type="catalytic activity">
    <reaction evidence="1">
        <text>adenosine(37) in tRNA + dimethylallyl diphosphate = N(6)-dimethylallyladenosine(37) in tRNA + diphosphate</text>
        <dbReference type="Rhea" id="RHEA:26482"/>
        <dbReference type="Rhea" id="RHEA-COMP:10162"/>
        <dbReference type="Rhea" id="RHEA-COMP:10375"/>
        <dbReference type="ChEBI" id="CHEBI:33019"/>
        <dbReference type="ChEBI" id="CHEBI:57623"/>
        <dbReference type="ChEBI" id="CHEBI:74411"/>
        <dbReference type="ChEBI" id="CHEBI:74415"/>
        <dbReference type="EC" id="2.5.1.75"/>
    </reaction>
</comment>
<comment type="cofactor">
    <cofactor evidence="1">
        <name>Mg(2+)</name>
        <dbReference type="ChEBI" id="CHEBI:18420"/>
    </cofactor>
</comment>
<comment type="subunit">
    <text evidence="1">Monomer.</text>
</comment>
<comment type="similarity">
    <text evidence="1">Belongs to the IPP transferase family.</text>
</comment>
<gene>
    <name evidence="1" type="primary">miaA</name>
    <name type="ordered locus">NWMN_1211</name>
</gene>
<sequence length="311" mass="35868">MNKNKPFIVVIVGPTASGKTELSIELAKRINGEIISGDSMQVYKHMNIGTAKVTPEEMDGIPHHLIDILNPDDTFSAYEFKRLAEDLITDITNRGKVPIIAGGTGLYIQSLIYNYELEDETVTPAQLSIVKQKLSALEHLDNQQLHDYLAQFDAVSAENIHPNNRQRVLRAIEYYLKTKKLLSNRKKVQQFTENYDTLLLGIEMSRKTLYSRINKRVDIMLDHGLFREVQQLVEQGYESCQSMQAIGYKELIPVINGQMIYEDAVNDLKQHSRQYAKRQMTWFKNKMSVHWLDKENMSLQMMLDEITTQIK</sequence>
<evidence type="ECO:0000255" key="1">
    <source>
        <dbReference type="HAMAP-Rule" id="MF_00185"/>
    </source>
</evidence>
<protein>
    <recommendedName>
        <fullName evidence="1">tRNA dimethylallyltransferase</fullName>
        <ecNumber evidence="1">2.5.1.75</ecNumber>
    </recommendedName>
    <alternativeName>
        <fullName evidence="1">Dimethylallyl diphosphate:tRNA dimethylallyltransferase</fullName>
        <shortName evidence="1">DMAPP:tRNA dimethylallyltransferase</shortName>
        <shortName evidence="1">DMATase</shortName>
    </alternativeName>
    <alternativeName>
        <fullName evidence="1">Isopentenyl-diphosphate:tRNA isopentenyltransferase</fullName>
        <shortName evidence="1">IPP transferase</shortName>
        <shortName evidence="1">IPPT</shortName>
        <shortName evidence="1">IPTase</shortName>
    </alternativeName>
</protein>